<keyword id="KW-0004">4Fe-4S</keyword>
<keyword id="KW-0903">Direct protein sequencing</keyword>
<keyword id="KW-0274">FAD</keyword>
<keyword id="KW-0285">Flavoprotein</keyword>
<keyword id="KW-0288">FMN</keyword>
<keyword id="KW-0408">Iron</keyword>
<keyword id="KW-0411">Iron-sulfur</keyword>
<keyword id="KW-0479">Metal-binding</keyword>
<keyword id="KW-0520">NAD</keyword>
<keyword id="KW-0560">Oxidoreductase</keyword>
<accession>P32382</accession>
<organism>
    <name type="scientific">Thermoanaerobacter brockii</name>
    <name type="common">Thermoanaerobium brockii</name>
    <dbReference type="NCBI Taxonomy" id="29323"/>
    <lineage>
        <taxon>Bacteria</taxon>
        <taxon>Bacillati</taxon>
        <taxon>Bacillota</taxon>
        <taxon>Clostridia</taxon>
        <taxon>Thermoanaerobacterales</taxon>
        <taxon>Thermoanaerobacteraceae</taxon>
        <taxon>Thermoanaerobacter</taxon>
    </lineage>
</organism>
<proteinExistence type="evidence at protein level"/>
<sequence>MTHFPNLFSEGRIGNLVIRNRIVMPPMATNLANEDGSVSQRLIDYYVARARGGVGLIILENVQVDYPQGKNVACQLRLDDDKYMAGFFELAEAVHSYGAKIFMQIHHAGRQTTPGITEGLQPVAPSPVPCSFLGTQPRELTINEIEEIIQKFVDAAVRAKGAMFDGIELHGAHGYLIGQFMSPRTNRRVDKYGGSFERRMRFPLEIIRRIKEAVGEDYPISFRFSADEFVEGGNTLEEGKQIAKMLEEAGVHVLHVSAGIYESMPTLLEPSRFEQGWRVYLAEEIKKVVNIPVITVGVIREPEFAEKIIAEGRADFVAVGRGLIADPEWPKKAKEGRQNEIRKCISCNIGCIGGRVFQNLRLRCTVNPVAGREGVYSEIKQAPVKKKVVVVGGGPAGMQAAITAAKRGHQVILYEKKQHLGGQLEIASASPGKAKIKWFRDWLEAELSRAGVEVRSGVTADAETIAALSPDYVILATGSEPVTPRIKGAEKENTFVFQAWDVLAGKVSFDKDEEVVVIGGGLVGCETAHYLAEKGAKVTIVEMLSDIAIDMEPISRFDMMQQFTKLGISARTGKVVTEILPRGVAAVGKEGKQDFIRAHKVVLAIGQSPVGNELKKTLEDKGIDVRVIGDAYNVGKIIDAVSSGFQVAWQI</sequence>
<name>NADO_THEBR</name>
<dbReference type="EC" id="1.-.-.-"/>
<dbReference type="EMBL" id="X67220">
    <property type="protein sequence ID" value="CAA47660.1"/>
    <property type="molecule type" value="Genomic_DNA"/>
</dbReference>
<dbReference type="PIR" id="S35706">
    <property type="entry name" value="S35706"/>
</dbReference>
<dbReference type="SMR" id="P32382"/>
<dbReference type="GO" id="GO:0051539">
    <property type="term" value="F:4 iron, 4 sulfur cluster binding"/>
    <property type="evidence" value="ECO:0007669"/>
    <property type="project" value="UniProtKB-KW"/>
</dbReference>
<dbReference type="GO" id="GO:0010181">
    <property type="term" value="F:FMN binding"/>
    <property type="evidence" value="ECO:0007669"/>
    <property type="project" value="InterPro"/>
</dbReference>
<dbReference type="GO" id="GO:0046872">
    <property type="term" value="F:metal ion binding"/>
    <property type="evidence" value="ECO:0007669"/>
    <property type="project" value="UniProtKB-KW"/>
</dbReference>
<dbReference type="GO" id="GO:0003954">
    <property type="term" value="F:NADH dehydrogenase activity"/>
    <property type="evidence" value="ECO:0007669"/>
    <property type="project" value="RHEA"/>
</dbReference>
<dbReference type="GO" id="GO:0009056">
    <property type="term" value="P:catabolic process"/>
    <property type="evidence" value="ECO:0007669"/>
    <property type="project" value="UniProtKB-ARBA"/>
</dbReference>
<dbReference type="CDD" id="cd02803">
    <property type="entry name" value="OYE_like_FMN_family"/>
    <property type="match status" value="1"/>
</dbReference>
<dbReference type="Gene3D" id="3.20.20.70">
    <property type="entry name" value="Aldolase class I"/>
    <property type="match status" value="1"/>
</dbReference>
<dbReference type="Gene3D" id="3.50.50.60">
    <property type="entry name" value="FAD/NAD(P)-binding domain"/>
    <property type="match status" value="1"/>
</dbReference>
<dbReference type="Gene3D" id="3.40.50.720">
    <property type="entry name" value="NAD(P)-binding Rossmann-like Domain"/>
    <property type="match status" value="1"/>
</dbReference>
<dbReference type="InterPro" id="IPR013785">
    <property type="entry name" value="Aldolase_TIM"/>
</dbReference>
<dbReference type="InterPro" id="IPR036188">
    <property type="entry name" value="FAD/NAD-bd_sf"/>
</dbReference>
<dbReference type="InterPro" id="IPR023753">
    <property type="entry name" value="FAD/NAD-binding_dom"/>
</dbReference>
<dbReference type="InterPro" id="IPR051793">
    <property type="entry name" value="NADH:flavin_oxidoreductase"/>
</dbReference>
<dbReference type="InterPro" id="IPR001155">
    <property type="entry name" value="OxRdtase_FMN_N"/>
</dbReference>
<dbReference type="PANTHER" id="PTHR42917">
    <property type="entry name" value="2,4-DIENOYL-COA REDUCTASE"/>
    <property type="match status" value="1"/>
</dbReference>
<dbReference type="PANTHER" id="PTHR42917:SF2">
    <property type="entry name" value="2,4-DIENOYL-COA REDUCTASE [(2E)-ENOYL-COA-PRODUCING]"/>
    <property type="match status" value="1"/>
</dbReference>
<dbReference type="Pfam" id="PF00724">
    <property type="entry name" value="Oxidored_FMN"/>
    <property type="match status" value="1"/>
</dbReference>
<dbReference type="Pfam" id="PF07992">
    <property type="entry name" value="Pyr_redox_2"/>
    <property type="match status" value="1"/>
</dbReference>
<dbReference type="PRINTS" id="PR00368">
    <property type="entry name" value="FADPNR"/>
</dbReference>
<dbReference type="PRINTS" id="PR00469">
    <property type="entry name" value="PNDRDTASEII"/>
</dbReference>
<dbReference type="SUPFAM" id="SSF51905">
    <property type="entry name" value="FAD/NAD(P)-binding domain"/>
    <property type="match status" value="1"/>
</dbReference>
<dbReference type="SUPFAM" id="SSF51395">
    <property type="entry name" value="FMN-linked oxidoreductases"/>
    <property type="match status" value="1"/>
</dbReference>
<reference key="1">
    <citation type="journal article" date="1993" name="Biochim. Biophys. Acta">
        <title>Cloning, sequencing and expression of the gene encoding NADH oxidase from the extreme anaerobic thermophile Thermoanaerobium brockii.</title>
        <authorList>
            <person name="Liu X.-L."/>
            <person name="Scopes R.K."/>
        </authorList>
    </citation>
    <scope>NUCLEOTIDE SEQUENCE [GENOMIC DNA]</scope>
    <scope>PARTIAL PROTEIN SEQUENCE</scope>
    <source>
        <strain>RT8.G4</strain>
    </source>
</reference>
<feature type="chain" id="PRO_0000194480" description="NADH oxidase">
    <location>
        <begin position="1"/>
        <end position="651"/>
    </location>
</feature>
<feature type="active site" description="Proton donor" evidence="1">
    <location>
        <position position="175"/>
    </location>
</feature>
<feature type="binding site" evidence="1">
    <location>
        <position position="104"/>
    </location>
    <ligand>
        <name>FMN</name>
        <dbReference type="ChEBI" id="CHEBI:58210"/>
    </ligand>
</feature>
<feature type="binding site" evidence="1">
    <location>
        <position position="223"/>
    </location>
    <ligand>
        <name>FMN</name>
        <dbReference type="ChEBI" id="CHEBI:58210"/>
    </ligand>
</feature>
<feature type="binding site" evidence="1">
    <location>
        <begin position="320"/>
        <end position="321"/>
    </location>
    <ligand>
        <name>FMN</name>
        <dbReference type="ChEBI" id="CHEBI:58210"/>
    </ligand>
</feature>
<feature type="binding site" evidence="1">
    <location>
        <position position="344"/>
    </location>
    <ligand>
        <name>[4Fe-4S] cluster</name>
        <dbReference type="ChEBI" id="CHEBI:49883"/>
    </ligand>
</feature>
<feature type="binding site" evidence="1">
    <location>
        <position position="347"/>
    </location>
    <ligand>
        <name>[4Fe-4S] cluster</name>
        <dbReference type="ChEBI" id="CHEBI:49883"/>
    </ligand>
</feature>
<feature type="binding site" evidence="1">
    <location>
        <position position="351"/>
    </location>
    <ligand>
        <name>[4Fe-4S] cluster</name>
        <dbReference type="ChEBI" id="CHEBI:49883"/>
    </ligand>
</feature>
<feature type="binding site" evidence="1">
    <location>
        <position position="364"/>
    </location>
    <ligand>
        <name>[4Fe-4S] cluster</name>
        <dbReference type="ChEBI" id="CHEBI:49883"/>
    </ligand>
</feature>
<feature type="binding site" evidence="1">
    <location>
        <position position="396"/>
    </location>
    <ligand>
        <name>FAD</name>
        <dbReference type="ChEBI" id="CHEBI:57692"/>
    </ligand>
</feature>
<feature type="binding site" evidence="1">
    <location>
        <position position="415"/>
    </location>
    <ligand>
        <name>FAD</name>
        <dbReference type="ChEBI" id="CHEBI:57692"/>
    </ligand>
</feature>
<feature type="binding site" evidence="1">
    <location>
        <position position="423"/>
    </location>
    <ligand>
        <name>FAD</name>
        <dbReference type="ChEBI" id="CHEBI:57692"/>
    </ligand>
</feature>
<feature type="binding site" evidence="1">
    <location>
        <position position="433"/>
    </location>
    <ligand>
        <name>FAD</name>
        <dbReference type="ChEBI" id="CHEBI:57692"/>
    </ligand>
</feature>
<feature type="binding site" evidence="1">
    <location>
        <position position="460"/>
    </location>
    <ligand>
        <name>FAD</name>
        <dbReference type="ChEBI" id="CHEBI:57692"/>
    </ligand>
</feature>
<evidence type="ECO:0000250" key="1">
    <source>
        <dbReference type="UniProtKB" id="P42593"/>
    </source>
</evidence>
<evidence type="ECO:0000305" key="2"/>
<comment type="function">
    <text>Reduces a range of alternative electron acceptors.</text>
</comment>
<comment type="catalytic activity">
    <reaction>
        <text>A + NADH + H(+) = AH2 + NAD(+)</text>
        <dbReference type="Rhea" id="RHEA:11356"/>
        <dbReference type="ChEBI" id="CHEBI:13193"/>
        <dbReference type="ChEBI" id="CHEBI:15378"/>
        <dbReference type="ChEBI" id="CHEBI:17499"/>
        <dbReference type="ChEBI" id="CHEBI:57540"/>
        <dbReference type="ChEBI" id="CHEBI:57945"/>
    </reaction>
</comment>
<comment type="cofactor">
    <cofactor evidence="1">
        <name>FMN</name>
        <dbReference type="ChEBI" id="CHEBI:58210"/>
    </cofactor>
</comment>
<comment type="cofactor">
    <cofactor evidence="1">
        <name>FAD</name>
        <dbReference type="ChEBI" id="CHEBI:57692"/>
    </cofactor>
</comment>
<comment type="cofactor">
    <cofactor evidence="1">
        <name>[4Fe-4S] cluster</name>
        <dbReference type="ChEBI" id="CHEBI:49883"/>
    </cofactor>
</comment>
<comment type="subunit">
    <text>Homohexamer.</text>
</comment>
<comment type="PTM">
    <text>The N-terminus is blocked.</text>
</comment>
<comment type="similarity">
    <text evidence="2">In the N-terminal section; belongs to the NADH:flavin oxidoreductase/NADH oxidase family.</text>
</comment>
<protein>
    <recommendedName>
        <fullName>NADH oxidase</fullName>
        <ecNumber>1.-.-.-</ecNumber>
    </recommendedName>
</protein>